<evidence type="ECO:0000255" key="1"/>
<evidence type="ECO:0000305" key="2"/>
<evidence type="ECO:0000305" key="3">
    <source>
    </source>
</evidence>
<evidence type="ECO:0000312" key="4">
    <source>
        <dbReference type="SGD" id="S000028797"/>
    </source>
</evidence>
<organism>
    <name type="scientific">Saccharomyces cerevisiae (strain ATCC 204508 / S288c)</name>
    <name type="common">Baker's yeast</name>
    <dbReference type="NCBI Taxonomy" id="559292"/>
    <lineage>
        <taxon>Eukaryota</taxon>
        <taxon>Fungi</taxon>
        <taxon>Dikarya</taxon>
        <taxon>Ascomycota</taxon>
        <taxon>Saccharomycotina</taxon>
        <taxon>Saccharomycetes</taxon>
        <taxon>Saccharomycetales</taxon>
        <taxon>Saccharomycetaceae</taxon>
        <taxon>Saccharomyces</taxon>
    </lineage>
</organism>
<gene>
    <name evidence="4" type="ordered locus">YIL156W-A</name>
</gene>
<name>YI56A_YEAST</name>
<feature type="chain" id="PRO_0000431042" description="Putative uncharacterized membrane protein YIL156W-A">
    <location>
        <begin position="1"/>
        <end position="133"/>
    </location>
</feature>
<feature type="transmembrane region" description="Helical; Name=1" evidence="1">
    <location>
        <begin position="13"/>
        <end position="33"/>
    </location>
</feature>
<feature type="transmembrane region" description="Helical; Name=2" evidence="1">
    <location>
        <begin position="73"/>
        <end position="93"/>
    </location>
</feature>
<reference key="1">
    <citation type="journal article" date="1997" name="Nature">
        <title>The nucleotide sequence of Saccharomyces cerevisiae chromosome IX.</title>
        <authorList>
            <person name="Churcher C.M."/>
            <person name="Bowman S."/>
            <person name="Badcock K."/>
            <person name="Bankier A.T."/>
            <person name="Brown D."/>
            <person name="Chillingworth T."/>
            <person name="Connor R."/>
            <person name="Devlin K."/>
            <person name="Gentles S."/>
            <person name="Hamlin N."/>
            <person name="Harris D.E."/>
            <person name="Horsnell T."/>
            <person name="Hunt S."/>
            <person name="Jagels K."/>
            <person name="Jones M."/>
            <person name="Lye G."/>
            <person name="Moule S."/>
            <person name="Odell C."/>
            <person name="Pearson D."/>
            <person name="Rajandream M.A."/>
            <person name="Rice P."/>
            <person name="Rowley N."/>
            <person name="Skelton J."/>
            <person name="Smith V."/>
            <person name="Walsh S.V."/>
            <person name="Whitehead S."/>
            <person name="Barrell B.G."/>
        </authorList>
    </citation>
    <scope>NUCLEOTIDE SEQUENCE [LARGE SCALE GENOMIC DNA]</scope>
    <source>
        <strain>ATCC 204508 / S288c</strain>
    </source>
</reference>
<reference key="2">
    <citation type="journal article" date="2014" name="G3 (Bethesda)">
        <title>The reference genome sequence of Saccharomyces cerevisiae: Then and now.</title>
        <authorList>
            <person name="Engel S.R."/>
            <person name="Dietrich F.S."/>
            <person name="Fisk D.G."/>
            <person name="Binkley G."/>
            <person name="Balakrishnan R."/>
            <person name="Costanzo M.C."/>
            <person name="Dwight S.S."/>
            <person name="Hitz B.C."/>
            <person name="Karra K."/>
            <person name="Nash R.S."/>
            <person name="Weng S."/>
            <person name="Wong E.D."/>
            <person name="Lloyd P."/>
            <person name="Skrzypek M.S."/>
            <person name="Miyasato S.R."/>
            <person name="Simison M."/>
            <person name="Cherry J.M."/>
        </authorList>
    </citation>
    <scope>GENOME REANNOTATION</scope>
    <source>
        <strain>ATCC 204508 / S288c</strain>
    </source>
</reference>
<protein>
    <recommendedName>
        <fullName evidence="2">Putative uncharacterized membrane protein YIL156W-A</fullName>
    </recommendedName>
</protein>
<comment type="subcellular location">
    <subcellularLocation>
        <location evidence="1">Membrane</location>
        <topology evidence="1">Multi-pass membrane protein</topology>
    </subcellularLocation>
</comment>
<comment type="miscellaneous">
    <text evidence="2">Partially overlaps COA1.</text>
</comment>
<comment type="caution">
    <text evidence="3">Product of a dubious gene prediction unlikely to encode a functional protein. Because of that it is not part of the S.cerevisiae S288c complete/reference proteome set.</text>
</comment>
<accession>A0A023PXG3</accession>
<proteinExistence type="uncertain"/>
<dbReference type="EMBL" id="KJ412276">
    <property type="protein sequence ID" value="AHX39319.1"/>
    <property type="molecule type" value="Genomic_DNA"/>
</dbReference>
<dbReference type="SMR" id="A0A023PXG3"/>
<dbReference type="PaxDb" id="4932-YIL156W-A"/>
<dbReference type="EnsemblFungi" id="YIL156W-A_mRNA">
    <property type="protein sequence ID" value="YIL156W-A"/>
    <property type="gene ID" value="YIL156W-A"/>
</dbReference>
<dbReference type="AGR" id="SGD:S000028797"/>
<dbReference type="SGD" id="S000028797">
    <property type="gene designation" value="YIL156W-A"/>
</dbReference>
<dbReference type="HOGENOM" id="CLU_1907874_0_0_1"/>
<dbReference type="GO" id="GO:0016020">
    <property type="term" value="C:membrane"/>
    <property type="evidence" value="ECO:0007669"/>
    <property type="project" value="UniProtKB-SubCell"/>
</dbReference>
<sequence>MATENNKNPAIRFLLSVVGSGNSLSILNGLFLSFKTILASSSATLLLNLALVENECSKEPRTSTALAAEGVTFGNPLVTSLNIMYSLFYLLLLCRGLVRRERSNCFKTGIKMTRRRFLSLHNDQNKNKQNAKR</sequence>
<keyword id="KW-0472">Membrane</keyword>
<keyword id="KW-0812">Transmembrane</keyword>
<keyword id="KW-1133">Transmembrane helix</keyword>